<organism>
    <name type="scientific">Corynebacterium glutamicum (strain R)</name>
    <dbReference type="NCBI Taxonomy" id="340322"/>
    <lineage>
        <taxon>Bacteria</taxon>
        <taxon>Bacillati</taxon>
        <taxon>Actinomycetota</taxon>
        <taxon>Actinomycetes</taxon>
        <taxon>Mycobacteriales</taxon>
        <taxon>Corynebacteriaceae</taxon>
        <taxon>Corynebacterium</taxon>
    </lineage>
</organism>
<feature type="chain" id="PRO_0000295969" description="Small ribosomal subunit protein uS12">
    <location>
        <begin position="1"/>
        <end position="122"/>
    </location>
</feature>
<feature type="modified residue" description="3-methylthioaspartic acid" evidence="1">
    <location>
        <position position="89"/>
    </location>
</feature>
<proteinExistence type="inferred from homology"/>
<gene>
    <name evidence="2" type="primary">rpsL</name>
    <name type="ordered locus">cgR_0595</name>
</gene>
<sequence length="122" mass="13430">MPTIQQLVRKGRHDKSAKVATAALKGSPQRRGVCTRVYTTTPKKPNSALRKVARVRLTSGIEVSAYIPGEGHNLQEHSMVLVRGGRVKDLPGVRYKIVRGALDTQGVKDRKQARSRYGAKRG</sequence>
<protein>
    <recommendedName>
        <fullName evidence="2">Small ribosomal subunit protein uS12</fullName>
    </recommendedName>
    <alternativeName>
        <fullName evidence="3">30S ribosomal protein S12</fullName>
    </alternativeName>
</protein>
<name>RS12_CORGB</name>
<evidence type="ECO:0000250" key="1"/>
<evidence type="ECO:0000255" key="2">
    <source>
        <dbReference type="HAMAP-Rule" id="MF_00403"/>
    </source>
</evidence>
<evidence type="ECO:0000305" key="3"/>
<accession>A4QBG7</accession>
<dbReference type="EMBL" id="AP009044">
    <property type="protein sequence ID" value="BAF53564.1"/>
    <property type="molecule type" value="Genomic_DNA"/>
</dbReference>
<dbReference type="RefSeq" id="WP_003854221.1">
    <property type="nucleotide sequence ID" value="NC_009342.1"/>
</dbReference>
<dbReference type="SMR" id="A4QBG7"/>
<dbReference type="GeneID" id="1021498"/>
<dbReference type="KEGG" id="cgt:cgR_0595"/>
<dbReference type="HOGENOM" id="CLU_104295_1_2_11"/>
<dbReference type="PhylomeDB" id="A4QBG7"/>
<dbReference type="Proteomes" id="UP000006698">
    <property type="component" value="Chromosome"/>
</dbReference>
<dbReference type="GO" id="GO:0015935">
    <property type="term" value="C:small ribosomal subunit"/>
    <property type="evidence" value="ECO:0007669"/>
    <property type="project" value="InterPro"/>
</dbReference>
<dbReference type="GO" id="GO:0019843">
    <property type="term" value="F:rRNA binding"/>
    <property type="evidence" value="ECO:0007669"/>
    <property type="project" value="UniProtKB-UniRule"/>
</dbReference>
<dbReference type="GO" id="GO:0003735">
    <property type="term" value="F:structural constituent of ribosome"/>
    <property type="evidence" value="ECO:0007669"/>
    <property type="project" value="InterPro"/>
</dbReference>
<dbReference type="GO" id="GO:0000049">
    <property type="term" value="F:tRNA binding"/>
    <property type="evidence" value="ECO:0007669"/>
    <property type="project" value="UniProtKB-UniRule"/>
</dbReference>
<dbReference type="GO" id="GO:0006412">
    <property type="term" value="P:translation"/>
    <property type="evidence" value="ECO:0007669"/>
    <property type="project" value="UniProtKB-UniRule"/>
</dbReference>
<dbReference type="CDD" id="cd03368">
    <property type="entry name" value="Ribosomal_S12"/>
    <property type="match status" value="1"/>
</dbReference>
<dbReference type="FunFam" id="2.40.50.140:FF:000001">
    <property type="entry name" value="30S ribosomal protein S12"/>
    <property type="match status" value="1"/>
</dbReference>
<dbReference type="Gene3D" id="2.40.50.140">
    <property type="entry name" value="Nucleic acid-binding proteins"/>
    <property type="match status" value="1"/>
</dbReference>
<dbReference type="HAMAP" id="MF_00403_B">
    <property type="entry name" value="Ribosomal_uS12_B"/>
    <property type="match status" value="1"/>
</dbReference>
<dbReference type="InterPro" id="IPR012340">
    <property type="entry name" value="NA-bd_OB-fold"/>
</dbReference>
<dbReference type="InterPro" id="IPR006032">
    <property type="entry name" value="Ribosomal_uS12"/>
</dbReference>
<dbReference type="InterPro" id="IPR005679">
    <property type="entry name" value="Ribosomal_uS12_bac"/>
</dbReference>
<dbReference type="NCBIfam" id="TIGR00981">
    <property type="entry name" value="rpsL_bact"/>
    <property type="match status" value="1"/>
</dbReference>
<dbReference type="PANTHER" id="PTHR11652">
    <property type="entry name" value="30S RIBOSOMAL PROTEIN S12 FAMILY MEMBER"/>
    <property type="match status" value="1"/>
</dbReference>
<dbReference type="Pfam" id="PF00164">
    <property type="entry name" value="Ribosom_S12_S23"/>
    <property type="match status" value="1"/>
</dbReference>
<dbReference type="PIRSF" id="PIRSF002133">
    <property type="entry name" value="Ribosomal_S12/S23"/>
    <property type="match status" value="1"/>
</dbReference>
<dbReference type="PRINTS" id="PR01034">
    <property type="entry name" value="RIBOSOMALS12"/>
</dbReference>
<dbReference type="SUPFAM" id="SSF50249">
    <property type="entry name" value="Nucleic acid-binding proteins"/>
    <property type="match status" value="1"/>
</dbReference>
<dbReference type="PROSITE" id="PS00055">
    <property type="entry name" value="RIBOSOMAL_S12"/>
    <property type="match status" value="1"/>
</dbReference>
<keyword id="KW-0488">Methylation</keyword>
<keyword id="KW-0687">Ribonucleoprotein</keyword>
<keyword id="KW-0689">Ribosomal protein</keyword>
<keyword id="KW-0694">RNA-binding</keyword>
<keyword id="KW-0699">rRNA-binding</keyword>
<keyword id="KW-0820">tRNA-binding</keyword>
<comment type="function">
    <text evidence="2">With S4 and S5 plays an important role in translational accuracy.</text>
</comment>
<comment type="function">
    <text evidence="2">Interacts with and stabilizes bases of the 16S rRNA that are involved in tRNA selection in the A site and with the mRNA backbone. Located at the interface of the 30S and 50S subunits, it traverses the body of the 30S subunit contacting proteins on the other side and probably holding the rRNA structure together. The combined cluster of proteins S8, S12 and S17 appears to hold together the shoulder and platform of the 30S subunit.</text>
</comment>
<comment type="subunit">
    <text evidence="2">Part of the 30S ribosomal subunit. Contacts proteins S8 and S17. May interact with IF1 in the 30S initiation complex.</text>
</comment>
<comment type="similarity">
    <text evidence="2">Belongs to the universal ribosomal protein uS12 family.</text>
</comment>
<reference key="1">
    <citation type="journal article" date="2007" name="Microbiology">
        <title>Comparative analysis of the Corynebacterium glutamicum group and complete genome sequence of strain R.</title>
        <authorList>
            <person name="Yukawa H."/>
            <person name="Omumasaba C.A."/>
            <person name="Nonaka H."/>
            <person name="Kos P."/>
            <person name="Okai N."/>
            <person name="Suzuki N."/>
            <person name="Suda M."/>
            <person name="Tsuge Y."/>
            <person name="Watanabe J."/>
            <person name="Ikeda Y."/>
            <person name="Vertes A.A."/>
            <person name="Inui M."/>
        </authorList>
    </citation>
    <scope>NUCLEOTIDE SEQUENCE [LARGE SCALE GENOMIC DNA]</scope>
    <source>
        <strain>R</strain>
    </source>
</reference>